<keyword id="KW-0119">Carbohydrate metabolism</keyword>
<keyword id="KW-0413">Isomerase</keyword>
<protein>
    <recommendedName>
        <fullName evidence="1">Putative N-acetylmannosamine-6-phosphate 2-epimerase</fullName>
        <ecNumber evidence="1">5.1.3.9</ecNumber>
    </recommendedName>
    <alternativeName>
        <fullName evidence="1">ManNAc-6-P epimerase</fullName>
    </alternativeName>
</protein>
<reference key="1">
    <citation type="journal article" date="2002" name="Proc. Natl. Acad. Sci. U.S.A.">
        <title>Genome sequence and comparative microarray analysis of serotype M18 group A Streptococcus strains associated with acute rheumatic fever outbreaks.</title>
        <authorList>
            <person name="Smoot J.C."/>
            <person name="Barbian K.D."/>
            <person name="Van Gompel J.J."/>
            <person name="Smoot L.M."/>
            <person name="Chaussee M.S."/>
            <person name="Sylva G.L."/>
            <person name="Sturdevant D.E."/>
            <person name="Ricklefs S.M."/>
            <person name="Porcella S.F."/>
            <person name="Parkins L.D."/>
            <person name="Beres S.B."/>
            <person name="Campbell D.S."/>
            <person name="Smith T.M."/>
            <person name="Zhang Q."/>
            <person name="Kapur V."/>
            <person name="Daly J.A."/>
            <person name="Veasy L.G."/>
            <person name="Musser J.M."/>
        </authorList>
    </citation>
    <scope>NUCLEOTIDE SEQUENCE [LARGE SCALE GENOMIC DNA]</scope>
    <source>
        <strain>MGAS8232</strain>
    </source>
</reference>
<gene>
    <name evidence="1" type="primary">nanE</name>
    <name type="ordered locus">spyM18_0233</name>
</gene>
<sequence length="234" mass="25066">MPDKPTKEKLMEQLKGGIIVSCQALPGEPLYSETGGIMPLMAKAAQEAGAVGIRANSVRDIKEIQAITDLPIIGIIKKDYPPQEPFITATMTEVDQLAALNIAVIAMDCTKRDRHDGLDIASFIRQVKEKYPNQLLMADISTFDEGLVAHQAGIDFVGTTLSGYTPYSRQEAGPDVALIEALCKAGIAVIAEGKIHSPEEAKKINDLGVAGIVVGGAITRPKEIAERFIEALKS</sequence>
<accession>P65523</accession>
<accession>Q9A1J0</accession>
<proteinExistence type="inferred from homology"/>
<organism>
    <name type="scientific">Streptococcus pyogenes serotype M18 (strain MGAS8232)</name>
    <dbReference type="NCBI Taxonomy" id="186103"/>
    <lineage>
        <taxon>Bacteria</taxon>
        <taxon>Bacillati</taxon>
        <taxon>Bacillota</taxon>
        <taxon>Bacilli</taxon>
        <taxon>Lactobacillales</taxon>
        <taxon>Streptococcaceae</taxon>
        <taxon>Streptococcus</taxon>
    </lineage>
</organism>
<feature type="chain" id="PRO_0000179812" description="Putative N-acetylmannosamine-6-phosphate 2-epimerase">
    <location>
        <begin position="1"/>
        <end position="234"/>
    </location>
</feature>
<comment type="function">
    <text evidence="1">Converts N-acetylmannosamine-6-phosphate (ManNAc-6-P) to N-acetylglucosamine-6-phosphate (GlcNAc-6-P).</text>
</comment>
<comment type="catalytic activity">
    <reaction evidence="1">
        <text>an N-acyl-D-glucosamine 6-phosphate = an N-acyl-D-mannosamine 6-phosphate</text>
        <dbReference type="Rhea" id="RHEA:23932"/>
        <dbReference type="ChEBI" id="CHEBI:57599"/>
        <dbReference type="ChEBI" id="CHEBI:57666"/>
        <dbReference type="EC" id="5.1.3.9"/>
    </reaction>
</comment>
<comment type="pathway">
    <text evidence="1">Amino-sugar metabolism; N-acetylneuraminate degradation; D-fructose 6-phosphate from N-acetylneuraminate: step 3/5.</text>
</comment>
<comment type="similarity">
    <text evidence="1">Belongs to the NanE family.</text>
</comment>
<dbReference type="EC" id="5.1.3.9" evidence="1"/>
<dbReference type="EMBL" id="AE009949">
    <property type="protein sequence ID" value="AAL97018.1"/>
    <property type="molecule type" value="Genomic_DNA"/>
</dbReference>
<dbReference type="RefSeq" id="WP_010921873.1">
    <property type="nucleotide sequence ID" value="NC_003485.1"/>
</dbReference>
<dbReference type="SMR" id="P65523"/>
<dbReference type="KEGG" id="spm:spyM18_0233"/>
<dbReference type="HOGENOM" id="CLU_086300_1_0_9"/>
<dbReference type="UniPathway" id="UPA00629">
    <property type="reaction ID" value="UER00682"/>
</dbReference>
<dbReference type="GO" id="GO:0005829">
    <property type="term" value="C:cytosol"/>
    <property type="evidence" value="ECO:0007669"/>
    <property type="project" value="TreeGrafter"/>
</dbReference>
<dbReference type="GO" id="GO:0047465">
    <property type="term" value="F:N-acylglucosamine-6-phosphate 2-epimerase activity"/>
    <property type="evidence" value="ECO:0007669"/>
    <property type="project" value="UniProtKB-EC"/>
</dbReference>
<dbReference type="GO" id="GO:0005975">
    <property type="term" value="P:carbohydrate metabolic process"/>
    <property type="evidence" value="ECO:0007669"/>
    <property type="project" value="UniProtKB-UniRule"/>
</dbReference>
<dbReference type="GO" id="GO:0006053">
    <property type="term" value="P:N-acetylmannosamine catabolic process"/>
    <property type="evidence" value="ECO:0007669"/>
    <property type="project" value="TreeGrafter"/>
</dbReference>
<dbReference type="GO" id="GO:0019262">
    <property type="term" value="P:N-acetylneuraminate catabolic process"/>
    <property type="evidence" value="ECO:0007669"/>
    <property type="project" value="UniProtKB-UniRule"/>
</dbReference>
<dbReference type="CDD" id="cd04729">
    <property type="entry name" value="NanE"/>
    <property type="match status" value="1"/>
</dbReference>
<dbReference type="FunFam" id="3.20.20.70:FF:000035">
    <property type="entry name" value="Putative N-acetylmannosamine-6-phosphate 2-epimerase"/>
    <property type="match status" value="1"/>
</dbReference>
<dbReference type="Gene3D" id="3.20.20.70">
    <property type="entry name" value="Aldolase class I"/>
    <property type="match status" value="1"/>
</dbReference>
<dbReference type="HAMAP" id="MF_01235">
    <property type="entry name" value="ManNAc6P_epimer"/>
    <property type="match status" value="1"/>
</dbReference>
<dbReference type="InterPro" id="IPR013785">
    <property type="entry name" value="Aldolase_TIM"/>
</dbReference>
<dbReference type="InterPro" id="IPR007260">
    <property type="entry name" value="NanE"/>
</dbReference>
<dbReference type="InterPro" id="IPR011060">
    <property type="entry name" value="RibuloseP-bd_barrel"/>
</dbReference>
<dbReference type="NCBIfam" id="NF002231">
    <property type="entry name" value="PRK01130.1"/>
    <property type="match status" value="1"/>
</dbReference>
<dbReference type="PANTHER" id="PTHR36204">
    <property type="entry name" value="N-ACETYLMANNOSAMINE-6-PHOSPHATE 2-EPIMERASE-RELATED"/>
    <property type="match status" value="1"/>
</dbReference>
<dbReference type="PANTHER" id="PTHR36204:SF1">
    <property type="entry name" value="N-ACETYLMANNOSAMINE-6-PHOSPHATE 2-EPIMERASE-RELATED"/>
    <property type="match status" value="1"/>
</dbReference>
<dbReference type="Pfam" id="PF04131">
    <property type="entry name" value="NanE"/>
    <property type="match status" value="1"/>
</dbReference>
<dbReference type="SUPFAM" id="SSF51366">
    <property type="entry name" value="Ribulose-phoshate binding barrel"/>
    <property type="match status" value="1"/>
</dbReference>
<name>NANE_STRP8</name>
<evidence type="ECO:0000255" key="1">
    <source>
        <dbReference type="HAMAP-Rule" id="MF_01235"/>
    </source>
</evidence>